<reference key="1">
    <citation type="journal article" date="2012" name="Environ. Microbiol.">
        <title>The genome sequence of Desulfatibacillum alkenivorans AK-01: a blueprint for anaerobic alkane oxidation.</title>
        <authorList>
            <person name="Callaghan A.V."/>
            <person name="Morris B.E."/>
            <person name="Pereira I.A."/>
            <person name="McInerney M.J."/>
            <person name="Austin R.N."/>
            <person name="Groves J.T."/>
            <person name="Kukor J.J."/>
            <person name="Suflita J.M."/>
            <person name="Young L.Y."/>
            <person name="Zylstra G.J."/>
            <person name="Wawrik B."/>
        </authorList>
    </citation>
    <scope>NUCLEOTIDE SEQUENCE [LARGE SCALE GENOMIC DNA]</scope>
    <source>
        <strain>AK-01</strain>
    </source>
</reference>
<comment type="function">
    <text evidence="1">Catalyzes the oxidation of 5,10-methylenetetrahydrofolate to 5,10-methenyltetrahydrofolate and then the hydrolysis of 5,10-methenyltetrahydrofolate to 10-formyltetrahydrofolate.</text>
</comment>
<comment type="catalytic activity">
    <reaction evidence="1">
        <text>(6R)-5,10-methylene-5,6,7,8-tetrahydrofolate + NADP(+) = (6R)-5,10-methenyltetrahydrofolate + NADPH</text>
        <dbReference type="Rhea" id="RHEA:22812"/>
        <dbReference type="ChEBI" id="CHEBI:15636"/>
        <dbReference type="ChEBI" id="CHEBI:57455"/>
        <dbReference type="ChEBI" id="CHEBI:57783"/>
        <dbReference type="ChEBI" id="CHEBI:58349"/>
        <dbReference type="EC" id="1.5.1.5"/>
    </reaction>
</comment>
<comment type="catalytic activity">
    <reaction evidence="1">
        <text>(6R)-5,10-methenyltetrahydrofolate + H2O = (6R)-10-formyltetrahydrofolate + H(+)</text>
        <dbReference type="Rhea" id="RHEA:23700"/>
        <dbReference type="ChEBI" id="CHEBI:15377"/>
        <dbReference type="ChEBI" id="CHEBI:15378"/>
        <dbReference type="ChEBI" id="CHEBI:57455"/>
        <dbReference type="ChEBI" id="CHEBI:195366"/>
        <dbReference type="EC" id="3.5.4.9"/>
    </reaction>
</comment>
<comment type="pathway">
    <text evidence="1">One-carbon metabolism; tetrahydrofolate interconversion.</text>
</comment>
<comment type="subunit">
    <text evidence="1">Homodimer.</text>
</comment>
<comment type="similarity">
    <text evidence="1">Belongs to the tetrahydrofolate dehydrogenase/cyclohydrolase family.</text>
</comment>
<feature type="chain" id="PRO_1000196764" description="Bifunctional protein FolD">
    <location>
        <begin position="1"/>
        <end position="302"/>
    </location>
</feature>
<feature type="binding site" evidence="1">
    <location>
        <begin position="168"/>
        <end position="170"/>
    </location>
    <ligand>
        <name>NADP(+)</name>
        <dbReference type="ChEBI" id="CHEBI:58349"/>
    </ligand>
</feature>
<feature type="binding site" evidence="1">
    <location>
        <position position="197"/>
    </location>
    <ligand>
        <name>NADP(+)</name>
        <dbReference type="ChEBI" id="CHEBI:58349"/>
    </ligand>
</feature>
<feature type="binding site" evidence="1">
    <location>
        <position position="238"/>
    </location>
    <ligand>
        <name>NADP(+)</name>
        <dbReference type="ChEBI" id="CHEBI:58349"/>
    </ligand>
</feature>
<proteinExistence type="inferred from homology"/>
<name>FOLD_DESAL</name>
<dbReference type="EC" id="1.5.1.5" evidence="1"/>
<dbReference type="EC" id="3.5.4.9" evidence="1"/>
<dbReference type="EMBL" id="CP001322">
    <property type="protein sequence ID" value="ACL05091.1"/>
    <property type="molecule type" value="Genomic_DNA"/>
</dbReference>
<dbReference type="RefSeq" id="WP_015948148.1">
    <property type="nucleotide sequence ID" value="NC_011768.1"/>
</dbReference>
<dbReference type="SMR" id="B8FLE5"/>
<dbReference type="KEGG" id="dal:Dalk_3403"/>
<dbReference type="eggNOG" id="COG0190">
    <property type="taxonomic scope" value="Bacteria"/>
</dbReference>
<dbReference type="HOGENOM" id="CLU_034045_1_2_7"/>
<dbReference type="UniPathway" id="UPA00193"/>
<dbReference type="Proteomes" id="UP000000739">
    <property type="component" value="Chromosome"/>
</dbReference>
<dbReference type="GO" id="GO:0005829">
    <property type="term" value="C:cytosol"/>
    <property type="evidence" value="ECO:0007669"/>
    <property type="project" value="TreeGrafter"/>
</dbReference>
<dbReference type="GO" id="GO:0004477">
    <property type="term" value="F:methenyltetrahydrofolate cyclohydrolase activity"/>
    <property type="evidence" value="ECO:0007669"/>
    <property type="project" value="UniProtKB-UniRule"/>
</dbReference>
<dbReference type="GO" id="GO:0004488">
    <property type="term" value="F:methylenetetrahydrofolate dehydrogenase (NADP+) activity"/>
    <property type="evidence" value="ECO:0007669"/>
    <property type="project" value="UniProtKB-UniRule"/>
</dbReference>
<dbReference type="GO" id="GO:0000105">
    <property type="term" value="P:L-histidine biosynthetic process"/>
    <property type="evidence" value="ECO:0007669"/>
    <property type="project" value="UniProtKB-KW"/>
</dbReference>
<dbReference type="GO" id="GO:0009086">
    <property type="term" value="P:methionine biosynthetic process"/>
    <property type="evidence" value="ECO:0007669"/>
    <property type="project" value="UniProtKB-KW"/>
</dbReference>
<dbReference type="GO" id="GO:0006164">
    <property type="term" value="P:purine nucleotide biosynthetic process"/>
    <property type="evidence" value="ECO:0007669"/>
    <property type="project" value="UniProtKB-KW"/>
</dbReference>
<dbReference type="GO" id="GO:0035999">
    <property type="term" value="P:tetrahydrofolate interconversion"/>
    <property type="evidence" value="ECO:0007669"/>
    <property type="project" value="UniProtKB-UniRule"/>
</dbReference>
<dbReference type="CDD" id="cd01080">
    <property type="entry name" value="NAD_bind_m-THF_DH_Cyclohyd"/>
    <property type="match status" value="1"/>
</dbReference>
<dbReference type="FunFam" id="3.40.50.720:FF:000189">
    <property type="entry name" value="Bifunctional protein FolD"/>
    <property type="match status" value="1"/>
</dbReference>
<dbReference type="FunFam" id="3.40.50.10860:FF:000005">
    <property type="entry name" value="C-1-tetrahydrofolate synthase, cytoplasmic, putative"/>
    <property type="match status" value="1"/>
</dbReference>
<dbReference type="Gene3D" id="3.40.50.10860">
    <property type="entry name" value="Leucine Dehydrogenase, chain A, domain 1"/>
    <property type="match status" value="1"/>
</dbReference>
<dbReference type="Gene3D" id="3.40.50.720">
    <property type="entry name" value="NAD(P)-binding Rossmann-like Domain"/>
    <property type="match status" value="1"/>
</dbReference>
<dbReference type="HAMAP" id="MF_01576">
    <property type="entry name" value="THF_DHG_CYH"/>
    <property type="match status" value="1"/>
</dbReference>
<dbReference type="InterPro" id="IPR046346">
    <property type="entry name" value="Aminoacid_DH-like_N_sf"/>
</dbReference>
<dbReference type="InterPro" id="IPR036291">
    <property type="entry name" value="NAD(P)-bd_dom_sf"/>
</dbReference>
<dbReference type="InterPro" id="IPR000672">
    <property type="entry name" value="THF_DH/CycHdrlase"/>
</dbReference>
<dbReference type="InterPro" id="IPR020630">
    <property type="entry name" value="THF_DH/CycHdrlase_cat_dom"/>
</dbReference>
<dbReference type="InterPro" id="IPR020867">
    <property type="entry name" value="THF_DH/CycHdrlase_CS"/>
</dbReference>
<dbReference type="InterPro" id="IPR020631">
    <property type="entry name" value="THF_DH/CycHdrlase_NAD-bd_dom"/>
</dbReference>
<dbReference type="NCBIfam" id="NF010765">
    <property type="entry name" value="PRK14168.1"/>
    <property type="match status" value="1"/>
</dbReference>
<dbReference type="PANTHER" id="PTHR48099:SF5">
    <property type="entry name" value="C-1-TETRAHYDROFOLATE SYNTHASE, CYTOPLASMIC"/>
    <property type="match status" value="1"/>
</dbReference>
<dbReference type="PANTHER" id="PTHR48099">
    <property type="entry name" value="C-1-TETRAHYDROFOLATE SYNTHASE, CYTOPLASMIC-RELATED"/>
    <property type="match status" value="1"/>
</dbReference>
<dbReference type="Pfam" id="PF00763">
    <property type="entry name" value="THF_DHG_CYH"/>
    <property type="match status" value="1"/>
</dbReference>
<dbReference type="Pfam" id="PF02882">
    <property type="entry name" value="THF_DHG_CYH_C"/>
    <property type="match status" value="1"/>
</dbReference>
<dbReference type="PRINTS" id="PR00085">
    <property type="entry name" value="THFDHDRGNASE"/>
</dbReference>
<dbReference type="SUPFAM" id="SSF53223">
    <property type="entry name" value="Aminoacid dehydrogenase-like, N-terminal domain"/>
    <property type="match status" value="1"/>
</dbReference>
<dbReference type="SUPFAM" id="SSF51735">
    <property type="entry name" value="NAD(P)-binding Rossmann-fold domains"/>
    <property type="match status" value="1"/>
</dbReference>
<dbReference type="PROSITE" id="PS00766">
    <property type="entry name" value="THF_DHG_CYH_1"/>
    <property type="match status" value="1"/>
</dbReference>
<dbReference type="PROSITE" id="PS00767">
    <property type="entry name" value="THF_DHG_CYH_2"/>
    <property type="match status" value="1"/>
</dbReference>
<gene>
    <name evidence="1" type="primary">folD</name>
    <name type="ordered locus">Dalk_3403</name>
</gene>
<protein>
    <recommendedName>
        <fullName evidence="1">Bifunctional protein FolD</fullName>
    </recommendedName>
    <domain>
        <recommendedName>
            <fullName evidence="1">Methylenetetrahydrofolate dehydrogenase</fullName>
            <ecNumber evidence="1">1.5.1.5</ecNumber>
        </recommendedName>
    </domain>
    <domain>
        <recommendedName>
            <fullName evidence="1">Methenyltetrahydrofolate cyclohydrolase</fullName>
            <ecNumber evidence="1">3.5.4.9</ecNumber>
        </recommendedName>
    </domain>
</protein>
<keyword id="KW-0028">Amino-acid biosynthesis</keyword>
<keyword id="KW-0368">Histidine biosynthesis</keyword>
<keyword id="KW-0378">Hydrolase</keyword>
<keyword id="KW-0486">Methionine biosynthesis</keyword>
<keyword id="KW-0511">Multifunctional enzyme</keyword>
<keyword id="KW-0521">NADP</keyword>
<keyword id="KW-0554">One-carbon metabolism</keyword>
<keyword id="KW-0560">Oxidoreductase</keyword>
<keyword id="KW-0658">Purine biosynthesis</keyword>
<keyword id="KW-1185">Reference proteome</keyword>
<organism>
    <name type="scientific">Desulfatibacillum aliphaticivorans</name>
    <dbReference type="NCBI Taxonomy" id="218208"/>
    <lineage>
        <taxon>Bacteria</taxon>
        <taxon>Pseudomonadati</taxon>
        <taxon>Thermodesulfobacteriota</taxon>
        <taxon>Desulfobacteria</taxon>
        <taxon>Desulfobacterales</taxon>
        <taxon>Desulfatibacillaceae</taxon>
        <taxon>Desulfatibacillum</taxon>
    </lineage>
</organism>
<accession>B8FLE5</accession>
<sequence length="302" mass="32158">MSAKLIKGTDIREEILEEVTKEVAELKEKTGKVPGLVTILVGENPASVSYVTLKIKTAHRVGFTEIQDNQSPDISEEDLLALIDKYNNDDSINGILVQLPLPKHIDDKKILNAIDPDKDVDGFHPVNVGRLMIGGDEVKFAPCTPAGIQEMIVRAGVETSGAEVVVVGRSNIVGKPIANMMVQKGPGANSTVTIVHTRTKDLAAHCQRADILIVAAGVPGLVKPEWIKKGACVIDVGVNRVGTKISEKTGKEIAVLRGDVDFDAAKEIAGSITPVPGGVGPMTITMLMVNTLKSFKFANGLM</sequence>
<evidence type="ECO:0000255" key="1">
    <source>
        <dbReference type="HAMAP-Rule" id="MF_01576"/>
    </source>
</evidence>